<organism>
    <name type="scientific">Nematostella vectensis</name>
    <name type="common">Starlet sea anemone</name>
    <dbReference type="NCBI Taxonomy" id="45351"/>
    <lineage>
        <taxon>Eukaryota</taxon>
        <taxon>Metazoa</taxon>
        <taxon>Cnidaria</taxon>
        <taxon>Anthozoa</taxon>
        <taxon>Hexacorallia</taxon>
        <taxon>Actiniaria</taxon>
        <taxon>Edwardsiidae</taxon>
        <taxon>Nematostella</taxon>
    </lineage>
</organism>
<name>EKI_NEMVE</name>
<sequence>MSVPHIQHRLDPDDPNTSIKAVIKEIKPELDPENLEFFEFTEGISNKLVGCRPTGGSDQEILLFRIYGNKTELFIDRKKEIATYSILNPLGYAPPVYATFENGFCYGFMVGSVMCPKTVCDPHISSLIAKHVADLHAIKLQEENPQPSWYKAILHFFSIIPDKFPDAAKENRFKEVLASKAYLLEEVKLLKSKLDKLESAIVFAHNDLLCKNIIYNKDKDSVCTIDFEYANPNPIAYDIANHFCEYAGVDEVDYSLYPQKDHQVKFLESYLKRAMELQGEKDVNPSSREIEKLYVHVNQFALAAHFFWGVWGLVQAHYSEIDFDFLEYAITRLNEYYLRKEKFLSLTCE</sequence>
<proteinExistence type="inferred from homology"/>
<feature type="chain" id="PRO_0000332723" description="Probable ethanolamine kinase">
    <location>
        <begin position="1"/>
        <end position="349"/>
    </location>
</feature>
<protein>
    <recommendedName>
        <fullName>Probable ethanolamine kinase</fullName>
        <ecNumber>2.7.1.82</ecNumber>
    </recommendedName>
</protein>
<keyword id="KW-0067">ATP-binding</keyword>
<keyword id="KW-0963">Cytoplasm</keyword>
<keyword id="KW-0418">Kinase</keyword>
<keyword id="KW-0444">Lipid biosynthesis</keyword>
<keyword id="KW-0443">Lipid metabolism</keyword>
<keyword id="KW-0547">Nucleotide-binding</keyword>
<keyword id="KW-0594">Phospholipid biosynthesis</keyword>
<keyword id="KW-1208">Phospholipid metabolism</keyword>
<keyword id="KW-1185">Reference proteome</keyword>
<keyword id="KW-0808">Transferase</keyword>
<accession>A7SK27</accession>
<gene>
    <name type="primary">etnk</name>
    <name type="ORF">v1g190677</name>
</gene>
<evidence type="ECO:0000250" key="1"/>
<evidence type="ECO:0000305" key="2"/>
<dbReference type="EC" id="2.7.1.82"/>
<dbReference type="EMBL" id="DS469683">
    <property type="protein sequence ID" value="EDO35939.1"/>
    <property type="molecule type" value="Genomic_DNA"/>
</dbReference>
<dbReference type="RefSeq" id="XP_001628002.1">
    <property type="nucleotide sequence ID" value="XM_001627952.1"/>
</dbReference>
<dbReference type="SMR" id="A7SK27"/>
<dbReference type="FunCoup" id="A7SK27">
    <property type="interactions" value="991"/>
</dbReference>
<dbReference type="STRING" id="45351.A7SK27"/>
<dbReference type="EnsemblMetazoa" id="EDO35939">
    <property type="protein sequence ID" value="EDO35939"/>
    <property type="gene ID" value="NEMVEDRAFT_v1g190677"/>
</dbReference>
<dbReference type="GeneID" id="5507359"/>
<dbReference type="KEGG" id="nve:5507359"/>
<dbReference type="eggNOG" id="KOG4720">
    <property type="taxonomic scope" value="Eukaryota"/>
</dbReference>
<dbReference type="HOGENOM" id="CLU_012712_1_0_1"/>
<dbReference type="InParanoid" id="A7SK27"/>
<dbReference type="OMA" id="FALIPKY"/>
<dbReference type="OrthoDB" id="10267235at2759"/>
<dbReference type="PhylomeDB" id="A7SK27"/>
<dbReference type="UniPathway" id="UPA00558">
    <property type="reaction ID" value="UER00741"/>
</dbReference>
<dbReference type="Proteomes" id="UP000001593">
    <property type="component" value="Unassembled WGS sequence"/>
</dbReference>
<dbReference type="GO" id="GO:0005737">
    <property type="term" value="C:cytoplasm"/>
    <property type="evidence" value="ECO:0000318"/>
    <property type="project" value="GO_Central"/>
</dbReference>
<dbReference type="GO" id="GO:0005524">
    <property type="term" value="F:ATP binding"/>
    <property type="evidence" value="ECO:0007669"/>
    <property type="project" value="UniProtKB-KW"/>
</dbReference>
<dbReference type="GO" id="GO:0004305">
    <property type="term" value="F:ethanolamine kinase activity"/>
    <property type="evidence" value="ECO:0000318"/>
    <property type="project" value="GO_Central"/>
</dbReference>
<dbReference type="GO" id="GO:0006646">
    <property type="term" value="P:phosphatidylethanolamine biosynthetic process"/>
    <property type="evidence" value="ECO:0000318"/>
    <property type="project" value="GO_Central"/>
</dbReference>
<dbReference type="CDD" id="cd05157">
    <property type="entry name" value="ETNK_euk"/>
    <property type="match status" value="1"/>
</dbReference>
<dbReference type="Gene3D" id="3.90.1200.10">
    <property type="match status" value="1"/>
</dbReference>
<dbReference type="Gene3D" id="3.30.200.20">
    <property type="entry name" value="Phosphorylase Kinase, domain 1"/>
    <property type="match status" value="1"/>
</dbReference>
<dbReference type="InterPro" id="IPR011009">
    <property type="entry name" value="Kinase-like_dom_sf"/>
</dbReference>
<dbReference type="PANTHER" id="PTHR22603">
    <property type="entry name" value="CHOLINE/ETHANOALAMINE KINASE"/>
    <property type="match status" value="1"/>
</dbReference>
<dbReference type="PANTHER" id="PTHR22603:SF66">
    <property type="entry name" value="ETHANOLAMINE KINASE"/>
    <property type="match status" value="1"/>
</dbReference>
<dbReference type="Pfam" id="PF01633">
    <property type="entry name" value="Choline_kinase"/>
    <property type="match status" value="1"/>
</dbReference>
<dbReference type="SUPFAM" id="SSF56112">
    <property type="entry name" value="Protein kinase-like (PK-like)"/>
    <property type="match status" value="1"/>
</dbReference>
<reference key="1">
    <citation type="journal article" date="2007" name="Science">
        <title>Sea anemone genome reveals ancestral eumetazoan gene repertoire and genomic organization.</title>
        <authorList>
            <person name="Putnam N.H."/>
            <person name="Srivastava M."/>
            <person name="Hellsten U."/>
            <person name="Dirks B."/>
            <person name="Chapman J."/>
            <person name="Salamov A."/>
            <person name="Terry A."/>
            <person name="Shapiro H."/>
            <person name="Lindquist E."/>
            <person name="Kapitonov V.V."/>
            <person name="Jurka J."/>
            <person name="Genikhovich G."/>
            <person name="Grigoriev I.V."/>
            <person name="Lucas S.M."/>
            <person name="Steele R.E."/>
            <person name="Finnerty J.R."/>
            <person name="Technau U."/>
            <person name="Martindale M.Q."/>
            <person name="Rokhsar D.S."/>
        </authorList>
    </citation>
    <scope>NUCLEOTIDE SEQUENCE [LARGE SCALE GENOMIC DNA]</scope>
    <source>
        <strain>CH2 X CH6</strain>
    </source>
</reference>
<comment type="function">
    <text evidence="1">Highly specific for ethanolamine phosphorylation. May be a rate-controlling step in phosphatidylethanolamine biosynthesis (By similarity).</text>
</comment>
<comment type="catalytic activity">
    <reaction>
        <text>ethanolamine + ATP = phosphoethanolamine + ADP + H(+)</text>
        <dbReference type="Rhea" id="RHEA:13069"/>
        <dbReference type="ChEBI" id="CHEBI:15378"/>
        <dbReference type="ChEBI" id="CHEBI:30616"/>
        <dbReference type="ChEBI" id="CHEBI:57603"/>
        <dbReference type="ChEBI" id="CHEBI:58190"/>
        <dbReference type="ChEBI" id="CHEBI:456216"/>
        <dbReference type="EC" id="2.7.1.82"/>
    </reaction>
</comment>
<comment type="pathway">
    <text>Phospholipid metabolism; phosphatidylethanolamine biosynthesis; phosphatidylethanolamine from ethanolamine: step 1/3.</text>
</comment>
<comment type="subcellular location">
    <subcellularLocation>
        <location evidence="1">Cytoplasm</location>
    </subcellularLocation>
</comment>
<comment type="similarity">
    <text evidence="2">Belongs to the choline/ethanolamine kinase family.</text>
</comment>